<protein>
    <recommendedName>
        <fullName evidence="1">Photosystem II D2 protein</fullName>
        <shortName evidence="1">PSII D2 protein</shortName>
        <ecNumber evidence="1">1.10.3.9</ecNumber>
    </recommendedName>
    <alternativeName>
        <fullName evidence="1">Photosystem Q(A) protein</fullName>
    </alternativeName>
</protein>
<evidence type="ECO:0000255" key="1">
    <source>
        <dbReference type="HAMAP-Rule" id="MF_01383"/>
    </source>
</evidence>
<evidence type="ECO:0000269" key="2">
    <source>
    </source>
</evidence>
<evidence type="ECO:0000269" key="3">
    <source>
    </source>
</evidence>
<evidence type="ECO:0007829" key="4">
    <source>
        <dbReference type="PDB" id="3JCU"/>
    </source>
</evidence>
<proteinExistence type="evidence at protein level"/>
<gene>
    <name evidence="1" type="primary">psbD</name>
</gene>
<reference key="1">
    <citation type="journal article" date="1984" name="Nucleic Acids Res.">
        <title>Structure of the spinach chloroplast genes for the D2 and 44 kd reaction-centre proteins of photosystem II and for tRNASer (UGA).</title>
        <authorList>
            <person name="Holschuh K."/>
            <person name="Bottomley W."/>
            <person name="Whitfeld P.R."/>
        </authorList>
    </citation>
    <scope>NUCLEOTIDE SEQUENCE [GENOMIC DNA]</scope>
</reference>
<reference key="2">
    <citation type="journal article" date="1984" name="Curr. Genet.">
        <title>Nucleotide sequence of the clustered genes for the 44kd chlorophyll a apoprotein and the '32kd'-like protein of the photosystem II reaction center in the spinach plastid chromosome.</title>
        <authorList>
            <person name="Alt J."/>
            <person name="Morris J."/>
            <person name="Westhoff P."/>
            <person name="Herrmann R.G."/>
        </authorList>
    </citation>
    <scope>NUCLEOTIDE SEQUENCE [GENOMIC DNA]</scope>
</reference>
<reference key="3">
    <citation type="journal article" date="2001" name="Plant Mol. Biol.">
        <title>The plastid chromosome of spinach (Spinacia oleracea): complete nucleotide sequence and gene organization.</title>
        <authorList>
            <person name="Schmitz-Linneweber C."/>
            <person name="Maier R.M."/>
            <person name="Alcaraz J.-P."/>
            <person name="Cottet A."/>
            <person name="Herrmann R.G."/>
            <person name="Mache R."/>
        </authorList>
    </citation>
    <scope>NUCLEOTIDE SEQUENCE [LARGE SCALE GENOMIC DNA]</scope>
    <source>
        <strain>cv. Geant d'hiver</strain>
        <strain>cv. Monatol</strain>
    </source>
</reference>
<reference key="4">
    <citation type="journal article" date="1988" name="J. Biol. Chem.">
        <title>Tandem mass spectrometry reveals that three photosystem II proteins of spinach chloroplasts contain N-acetyl-O-phosphothreonine at their NH2 termini.</title>
        <authorList>
            <person name="Michel H."/>
            <person name="Hunt D.F."/>
            <person name="Shabanowitz J."/>
            <person name="Bennett J."/>
        </authorList>
    </citation>
    <scope>PROTEIN SEQUENCE OF 2-7</scope>
    <scope>SUBCELLULAR LOCATION</scope>
    <scope>ACETYLATION AT THR-2</scope>
    <scope>PHOSPHORYLATION AT THR-2</scope>
</reference>
<reference key="5">
    <citation type="journal article" date="1998" name="Protein Sci.">
        <title>Electrospray-ionization mass spectrometry of intact intrinsic membrane proteins.</title>
        <authorList>
            <person name="Whitelegge J.P."/>
            <person name="Gundersen C.B."/>
            <person name="Faull K.F."/>
        </authorList>
    </citation>
    <scope>MASS SPECTROMETRY</scope>
</reference>
<reference key="6">
    <citation type="journal article" date="1996" name="Biochemistry">
        <title>A model for the photosystem II reaction center core including the structure of the primary donor P680.</title>
        <authorList>
            <person name="Svensson B."/>
            <person name="Etchebest C."/>
            <person name="Tuffery P."/>
            <person name="van Kan P."/>
            <person name="Smith J."/>
            <person name="Styring S."/>
        </authorList>
    </citation>
    <scope>3D-STRUCTURE MODELING</scope>
</reference>
<sequence>MTIAVGKFTKDEKDLFDSMDDWLRRDRFVFVGWSGLLLFPCAYFALGGWFTGTTFVTSWYTHGLASSYLEGCNFLTAAVSTPANSLAHSLLLLWGPEAQGDFTRWCQLGGLWAFVALHGAFALIGFMLRQFELARSVQLRPYNAIAFSGPIAVFVSVFLIYPLGQSGWFFAPSFGVAAIFRFILFFQGFHNWTLNPFHMMGVAGVLGAALLCAIHGATVENTLFEDGDGANTFRAFNPTQAEETYSMVTANRFWSQIFGVAFSNKRWLHFFMLFVPVTGLWMSALGVVGLALNLRAYDFVSQEIRAAEDPEFETFYTKNILLNEGIRAWMAAQDQPHENLIFPEEVLPRGNAL</sequence>
<organism>
    <name type="scientific">Spinacia oleracea</name>
    <name type="common">Spinach</name>
    <dbReference type="NCBI Taxonomy" id="3562"/>
    <lineage>
        <taxon>Eukaryota</taxon>
        <taxon>Viridiplantae</taxon>
        <taxon>Streptophyta</taxon>
        <taxon>Embryophyta</taxon>
        <taxon>Tracheophyta</taxon>
        <taxon>Spermatophyta</taxon>
        <taxon>Magnoliopsida</taxon>
        <taxon>eudicotyledons</taxon>
        <taxon>Gunneridae</taxon>
        <taxon>Pentapetalae</taxon>
        <taxon>Caryophyllales</taxon>
        <taxon>Chenopodiaceae</taxon>
        <taxon>Chenopodioideae</taxon>
        <taxon>Anserineae</taxon>
        <taxon>Spinacia</taxon>
    </lineage>
</organism>
<geneLocation type="chloroplast"/>
<name>PSBD_SPIOL</name>
<accession>P06005</accession>
<feature type="initiator methionine" description="Removed" evidence="2">
    <location>
        <position position="1"/>
    </location>
</feature>
<feature type="chain" id="PRO_0000090521" description="Photosystem II D2 protein">
    <location>
        <begin position="2"/>
        <end position="353"/>
    </location>
</feature>
<feature type="transmembrane region" description="Helical" evidence="1">
    <location>
        <begin position="41"/>
        <end position="61"/>
    </location>
</feature>
<feature type="transmembrane region" description="Helical" evidence="1">
    <location>
        <begin position="125"/>
        <end position="141"/>
    </location>
</feature>
<feature type="transmembrane region" description="Helical" evidence="1">
    <location>
        <begin position="153"/>
        <end position="166"/>
    </location>
</feature>
<feature type="transmembrane region" description="Helical" evidence="1">
    <location>
        <begin position="208"/>
        <end position="228"/>
    </location>
</feature>
<feature type="transmembrane region" description="Helical" evidence="1">
    <location>
        <begin position="279"/>
        <end position="295"/>
    </location>
</feature>
<feature type="binding site" description="axial binding residue" evidence="1">
    <location>
        <position position="118"/>
    </location>
    <ligand>
        <name>chlorophyll a</name>
        <dbReference type="ChEBI" id="CHEBI:58416"/>
        <label>ChlzD2</label>
    </ligand>
    <ligandPart>
        <name>Mg</name>
        <dbReference type="ChEBI" id="CHEBI:25107"/>
    </ligandPart>
</feature>
<feature type="binding site" evidence="1">
    <location>
        <position position="130"/>
    </location>
    <ligand>
        <name>pheophytin a</name>
        <dbReference type="ChEBI" id="CHEBI:136840"/>
        <label>D2</label>
    </ligand>
</feature>
<feature type="binding site" evidence="1">
    <location>
        <position position="143"/>
    </location>
    <ligand>
        <name>pheophytin a</name>
        <dbReference type="ChEBI" id="CHEBI:136840"/>
        <label>D2</label>
    </ligand>
</feature>
<feature type="binding site" description="axial binding residue" evidence="1">
    <location>
        <position position="198"/>
    </location>
    <ligand>
        <name>chlorophyll a</name>
        <dbReference type="ChEBI" id="CHEBI:58416"/>
        <label>PD2</label>
    </ligand>
    <ligandPart>
        <name>Mg</name>
        <dbReference type="ChEBI" id="CHEBI:25107"/>
    </ligandPart>
</feature>
<feature type="binding site" evidence="1">
    <location>
        <position position="215"/>
    </location>
    <ligand>
        <name>a plastoquinone</name>
        <dbReference type="ChEBI" id="CHEBI:17757"/>
        <label>Q(A)</label>
    </ligand>
</feature>
<feature type="binding site" evidence="1">
    <location>
        <position position="215"/>
    </location>
    <ligand>
        <name>Fe cation</name>
        <dbReference type="ChEBI" id="CHEBI:24875"/>
        <note>ligand shared with heterodimeric partner</note>
    </ligand>
</feature>
<feature type="binding site" evidence="1">
    <location>
        <position position="262"/>
    </location>
    <ligand>
        <name>a plastoquinone</name>
        <dbReference type="ChEBI" id="CHEBI:17757"/>
        <label>Q(A)</label>
    </ligand>
</feature>
<feature type="binding site" evidence="1">
    <location>
        <position position="269"/>
    </location>
    <ligand>
        <name>Fe cation</name>
        <dbReference type="ChEBI" id="CHEBI:24875"/>
        <note>ligand shared with heterodimeric partner</note>
    </ligand>
</feature>
<feature type="modified residue" description="N-acetylthreonine" evidence="2">
    <location>
        <position position="2"/>
    </location>
</feature>
<feature type="modified residue" description="Phosphothreonine" evidence="2">
    <location>
        <position position="2"/>
    </location>
</feature>
<feature type="helix" evidence="4">
    <location>
        <begin position="15"/>
        <end position="23"/>
    </location>
</feature>
<feature type="strand" evidence="4">
    <location>
        <begin position="27"/>
        <end position="29"/>
    </location>
</feature>
<feature type="helix" evidence="4">
    <location>
        <begin position="32"/>
        <end position="54"/>
    </location>
</feature>
<feature type="turn" evidence="4">
    <location>
        <begin position="59"/>
        <end position="62"/>
    </location>
</feature>
<feature type="turn" evidence="4">
    <location>
        <begin position="68"/>
        <end position="71"/>
    </location>
</feature>
<feature type="turn" evidence="4">
    <location>
        <begin position="74"/>
        <end position="76"/>
    </location>
</feature>
<feature type="helix" evidence="4">
    <location>
        <begin position="84"/>
        <end position="86"/>
    </location>
</feature>
<feature type="turn" evidence="4">
    <location>
        <begin position="96"/>
        <end position="98"/>
    </location>
</feature>
<feature type="helix" evidence="4">
    <location>
        <begin position="102"/>
        <end position="107"/>
    </location>
</feature>
<feature type="helix" evidence="4">
    <location>
        <begin position="110"/>
        <end position="136"/>
    </location>
</feature>
<feature type="helix" evidence="4">
    <location>
        <begin position="143"/>
        <end position="158"/>
    </location>
</feature>
<feature type="helix" evidence="4">
    <location>
        <begin position="160"/>
        <end position="164"/>
    </location>
</feature>
<feature type="strand" evidence="4">
    <location>
        <begin position="165"/>
        <end position="167"/>
    </location>
</feature>
<feature type="helix" evidence="4">
    <location>
        <begin position="168"/>
        <end position="170"/>
    </location>
</feature>
<feature type="helix" evidence="4">
    <location>
        <begin position="176"/>
        <end position="190"/>
    </location>
</feature>
<feature type="turn" evidence="4">
    <location>
        <begin position="192"/>
        <end position="194"/>
    </location>
</feature>
<feature type="helix" evidence="4">
    <location>
        <begin position="196"/>
        <end position="221"/>
    </location>
</feature>
<feature type="turn" evidence="4">
    <location>
        <begin position="233"/>
        <end position="235"/>
    </location>
</feature>
<feature type="helix" evidence="4">
    <location>
        <begin position="247"/>
        <end position="256"/>
    </location>
</feature>
<feature type="helix" evidence="4">
    <location>
        <begin position="265"/>
        <end position="290"/>
    </location>
</feature>
<feature type="turn" evidence="4">
    <location>
        <begin position="291"/>
        <end position="293"/>
    </location>
</feature>
<feature type="helix" evidence="4">
    <location>
        <begin position="300"/>
        <end position="308"/>
    </location>
</feature>
<feature type="helix" evidence="4">
    <location>
        <begin position="315"/>
        <end position="334"/>
    </location>
</feature>
<feature type="helix" evidence="4">
    <location>
        <begin position="336"/>
        <end position="338"/>
    </location>
</feature>
<feature type="helix" evidence="4">
    <location>
        <begin position="344"/>
        <end position="346"/>
    </location>
</feature>
<keyword id="KW-0002">3D-structure</keyword>
<keyword id="KW-0007">Acetylation</keyword>
<keyword id="KW-0148">Chlorophyll</keyword>
<keyword id="KW-0150">Chloroplast</keyword>
<keyword id="KW-0157">Chromophore</keyword>
<keyword id="KW-0903">Direct protein sequencing</keyword>
<keyword id="KW-0249">Electron transport</keyword>
<keyword id="KW-0408">Iron</keyword>
<keyword id="KW-0460">Magnesium</keyword>
<keyword id="KW-0472">Membrane</keyword>
<keyword id="KW-0479">Metal-binding</keyword>
<keyword id="KW-0560">Oxidoreductase</keyword>
<keyword id="KW-0597">Phosphoprotein</keyword>
<keyword id="KW-0602">Photosynthesis</keyword>
<keyword id="KW-0604">Photosystem II</keyword>
<keyword id="KW-0934">Plastid</keyword>
<keyword id="KW-1185">Reference proteome</keyword>
<keyword id="KW-0793">Thylakoid</keyword>
<keyword id="KW-0812">Transmembrane</keyword>
<keyword id="KW-1133">Transmembrane helix</keyword>
<keyword id="KW-0813">Transport</keyword>
<comment type="function">
    <text evidence="1">Photosystem II (PSII) is a light-driven water:plastoquinone oxidoreductase that uses light energy to abstract electrons from H(2)O, generating O(2) and a proton gradient subsequently used for ATP formation. It consists of a core antenna complex that captures photons, and an electron transfer chain that converts photonic excitation into a charge separation. The D1/D2 (PsbA/PsbD) reaction center heterodimer binds P680, the primary electron donor of PSII as well as several subsequent electron acceptors. D2 is needed for assembly of a stable PSII complex.</text>
</comment>
<comment type="catalytic activity">
    <reaction evidence="1">
        <text>2 a plastoquinone + 4 hnu + 2 H2O = 2 a plastoquinol + O2</text>
        <dbReference type="Rhea" id="RHEA:36359"/>
        <dbReference type="Rhea" id="RHEA-COMP:9561"/>
        <dbReference type="Rhea" id="RHEA-COMP:9562"/>
        <dbReference type="ChEBI" id="CHEBI:15377"/>
        <dbReference type="ChEBI" id="CHEBI:15379"/>
        <dbReference type="ChEBI" id="CHEBI:17757"/>
        <dbReference type="ChEBI" id="CHEBI:30212"/>
        <dbReference type="ChEBI" id="CHEBI:62192"/>
        <dbReference type="EC" id="1.10.3.9"/>
    </reaction>
</comment>
<comment type="cofactor">
    <text evidence="1">The D1/D2 heterodimer binds P680, chlorophylls that are the primary electron donor of PSII, and subsequent electron acceptors. It shares a non-heme iron and each subunit binds pheophytin, quinone, additional chlorophylls, carotenoids and lipids. There is also a Cl(-1) ion associated with D1 and D2, which is required for oxygen evolution. The PSII complex binds additional chlorophylls, carotenoids and specific lipids.</text>
</comment>
<comment type="subunit">
    <text evidence="1">PSII is composed of 1 copy each of membrane proteins PsbA, PsbB, PsbC, PsbD, PsbE, PsbF, PsbH, PsbI, PsbJ, PsbK, PsbL, PsbM, PsbT, PsbX, PsbY, PsbZ, Psb30/Ycf12, at least 3 peripheral proteins of the oxygen-evolving complex and a large number of cofactors. It forms dimeric complexes.</text>
</comment>
<comment type="subcellular location">
    <subcellularLocation>
        <location evidence="1 2">Plastid</location>
        <location evidence="1 2">Chloroplast thylakoid membrane</location>
        <topology evidence="1">Multi-pass membrane protein</topology>
    </subcellularLocation>
</comment>
<comment type="mass spectrometry">
    <text>Non-phosphorylated.</text>
</comment>
<comment type="miscellaneous">
    <text evidence="1">2 of the reaction center chlorophylls (ChlD1 and ChlD2) are entirely coordinated by water.</text>
</comment>
<comment type="similarity">
    <text evidence="1">Belongs to the reaction center PufL/M/PsbA/D family.</text>
</comment>
<dbReference type="EC" id="1.10.3.9" evidence="1"/>
<dbReference type="EMBL" id="M36833">
    <property type="protein sequence ID" value="AAA84630.1"/>
    <property type="molecule type" value="Genomic_DNA"/>
</dbReference>
<dbReference type="EMBL" id="AJ400848">
    <property type="protein sequence ID" value="CAB88721.1"/>
    <property type="molecule type" value="Genomic_DNA"/>
</dbReference>
<dbReference type="PIR" id="A23038">
    <property type="entry name" value="F2SPD2"/>
</dbReference>
<dbReference type="RefSeq" id="NP_054928.1">
    <property type="nucleotide sequence ID" value="NC_002202.1"/>
</dbReference>
<dbReference type="PDB" id="3JCU">
    <property type="method" value="EM"/>
    <property type="resolution" value="3.20 A"/>
    <property type="chains" value="D/d=1-353"/>
</dbReference>
<dbReference type="PDB" id="8Z9D">
    <property type="method" value="EM"/>
    <property type="resolution" value="3.22 A"/>
    <property type="chains" value="D/DD/Dd/d=1-352"/>
</dbReference>
<dbReference type="PDBsum" id="3JCU"/>
<dbReference type="PDBsum" id="8Z9D"/>
<dbReference type="EMDB" id="EMD-39860"/>
<dbReference type="SMR" id="P06005"/>
<dbReference type="DIP" id="DIP-62010N"/>
<dbReference type="FunCoup" id="P06005">
    <property type="interactions" value="298"/>
</dbReference>
<dbReference type="IntAct" id="P06005">
    <property type="interactions" value="1"/>
</dbReference>
<dbReference type="STRING" id="3562.P06005"/>
<dbReference type="iPTMnet" id="P06005"/>
<dbReference type="GeneID" id="2715610"/>
<dbReference type="KEGG" id="soe:2715610"/>
<dbReference type="InParanoid" id="P06005"/>
<dbReference type="OrthoDB" id="1924410at2759"/>
<dbReference type="Proteomes" id="UP001155700">
    <property type="component" value="Chloroplast Pltd"/>
</dbReference>
<dbReference type="GO" id="GO:0009535">
    <property type="term" value="C:chloroplast thylakoid membrane"/>
    <property type="evidence" value="ECO:0007669"/>
    <property type="project" value="UniProtKB-SubCell"/>
</dbReference>
<dbReference type="GO" id="GO:0009523">
    <property type="term" value="C:photosystem II"/>
    <property type="evidence" value="ECO:0000318"/>
    <property type="project" value="GO_Central"/>
</dbReference>
<dbReference type="GO" id="GO:0016168">
    <property type="term" value="F:chlorophyll binding"/>
    <property type="evidence" value="ECO:0007669"/>
    <property type="project" value="UniProtKB-UniRule"/>
</dbReference>
<dbReference type="GO" id="GO:0045156">
    <property type="term" value="F:electron transporter, transferring electrons within the cyclic electron transport pathway of photosynthesis activity"/>
    <property type="evidence" value="ECO:0007669"/>
    <property type="project" value="InterPro"/>
</dbReference>
<dbReference type="GO" id="GO:0005506">
    <property type="term" value="F:iron ion binding"/>
    <property type="evidence" value="ECO:0007669"/>
    <property type="project" value="UniProtKB-UniRule"/>
</dbReference>
<dbReference type="GO" id="GO:0010242">
    <property type="term" value="F:oxygen evolving activity"/>
    <property type="evidence" value="ECO:0007669"/>
    <property type="project" value="UniProtKB-EC"/>
</dbReference>
<dbReference type="GO" id="GO:0009772">
    <property type="term" value="P:photosynthetic electron transport in photosystem II"/>
    <property type="evidence" value="ECO:0007669"/>
    <property type="project" value="InterPro"/>
</dbReference>
<dbReference type="CDD" id="cd09288">
    <property type="entry name" value="Photosystem-II_D2"/>
    <property type="match status" value="1"/>
</dbReference>
<dbReference type="FunFam" id="1.20.85.10:FF:000001">
    <property type="entry name" value="photosystem II D2 protein-like"/>
    <property type="match status" value="1"/>
</dbReference>
<dbReference type="Gene3D" id="1.20.85.10">
    <property type="entry name" value="Photosystem II protein D1-like"/>
    <property type="match status" value="1"/>
</dbReference>
<dbReference type="HAMAP" id="MF_01383">
    <property type="entry name" value="PSII_PsbD_D2"/>
    <property type="match status" value="1"/>
</dbReference>
<dbReference type="InterPro" id="IPR055266">
    <property type="entry name" value="D1/D2"/>
</dbReference>
<dbReference type="InterPro" id="IPR036854">
    <property type="entry name" value="Photo_II_D1/D2_sf"/>
</dbReference>
<dbReference type="InterPro" id="IPR000484">
    <property type="entry name" value="Photo_RC_L/M"/>
</dbReference>
<dbReference type="InterPro" id="IPR055265">
    <property type="entry name" value="Photo_RC_L/M_CS"/>
</dbReference>
<dbReference type="InterPro" id="IPR005868">
    <property type="entry name" value="PSII_PsbD/D2"/>
</dbReference>
<dbReference type="NCBIfam" id="TIGR01152">
    <property type="entry name" value="psbD"/>
    <property type="match status" value="1"/>
</dbReference>
<dbReference type="PANTHER" id="PTHR33149:SF57">
    <property type="entry name" value="PHOTOSYSTEM II D2 PROTEIN"/>
    <property type="match status" value="1"/>
</dbReference>
<dbReference type="PANTHER" id="PTHR33149">
    <property type="entry name" value="PHOTOSYSTEM II PROTEIN D1"/>
    <property type="match status" value="1"/>
</dbReference>
<dbReference type="Pfam" id="PF00124">
    <property type="entry name" value="Photo_RC"/>
    <property type="match status" value="1"/>
</dbReference>
<dbReference type="PRINTS" id="PR00256">
    <property type="entry name" value="REACTNCENTRE"/>
</dbReference>
<dbReference type="SUPFAM" id="SSF81483">
    <property type="entry name" value="Bacterial photosystem II reaction centre, L and M subunits"/>
    <property type="match status" value="1"/>
</dbReference>
<dbReference type="PROSITE" id="PS00244">
    <property type="entry name" value="REACTION_CENTER"/>
    <property type="match status" value="1"/>
</dbReference>